<feature type="chain" id="PRO_0000125271" description="Large ribosomal subunit protein uL22">
    <location>
        <begin position="1"/>
        <end position="155"/>
    </location>
</feature>
<dbReference type="EMBL" id="AE000782">
    <property type="protein sequence ID" value="AAB89352.1"/>
    <property type="molecule type" value="Genomic_DNA"/>
</dbReference>
<dbReference type="PIR" id="G69489">
    <property type="entry name" value="G69489"/>
</dbReference>
<dbReference type="SMR" id="O28359"/>
<dbReference type="STRING" id="224325.AF_1920"/>
<dbReference type="PaxDb" id="224325-AF_1920"/>
<dbReference type="EnsemblBacteria" id="AAB89352">
    <property type="protein sequence ID" value="AAB89352"/>
    <property type="gene ID" value="AF_1920"/>
</dbReference>
<dbReference type="KEGG" id="afu:AF_1920"/>
<dbReference type="eggNOG" id="arCOG04098">
    <property type="taxonomic scope" value="Archaea"/>
</dbReference>
<dbReference type="HOGENOM" id="CLU_083987_0_2_2"/>
<dbReference type="PhylomeDB" id="O28359"/>
<dbReference type="Proteomes" id="UP000002199">
    <property type="component" value="Chromosome"/>
</dbReference>
<dbReference type="GO" id="GO:0022625">
    <property type="term" value="C:cytosolic large ribosomal subunit"/>
    <property type="evidence" value="ECO:0007669"/>
    <property type="project" value="TreeGrafter"/>
</dbReference>
<dbReference type="GO" id="GO:0019843">
    <property type="term" value="F:rRNA binding"/>
    <property type="evidence" value="ECO:0007669"/>
    <property type="project" value="UniProtKB-UniRule"/>
</dbReference>
<dbReference type="GO" id="GO:0003735">
    <property type="term" value="F:structural constituent of ribosome"/>
    <property type="evidence" value="ECO:0007669"/>
    <property type="project" value="InterPro"/>
</dbReference>
<dbReference type="GO" id="GO:0002181">
    <property type="term" value="P:cytoplasmic translation"/>
    <property type="evidence" value="ECO:0007669"/>
    <property type="project" value="TreeGrafter"/>
</dbReference>
<dbReference type="CDD" id="cd00336">
    <property type="entry name" value="Ribosomal_L22"/>
    <property type="match status" value="1"/>
</dbReference>
<dbReference type="FunFam" id="3.90.470.10:FF:000015">
    <property type="entry name" value="50S ribosomal protein L22"/>
    <property type="match status" value="1"/>
</dbReference>
<dbReference type="Gene3D" id="3.90.470.10">
    <property type="entry name" value="Ribosomal protein L22/L17"/>
    <property type="match status" value="1"/>
</dbReference>
<dbReference type="HAMAP" id="MF_01331_A">
    <property type="entry name" value="Ribosomal_uL22_A"/>
    <property type="match status" value="1"/>
</dbReference>
<dbReference type="InterPro" id="IPR001063">
    <property type="entry name" value="Ribosomal_uL22"/>
</dbReference>
<dbReference type="InterPro" id="IPR005721">
    <property type="entry name" value="Ribosomal_uL22_euk/arc"/>
</dbReference>
<dbReference type="InterPro" id="IPR036394">
    <property type="entry name" value="Ribosomal_uL22_sf"/>
</dbReference>
<dbReference type="NCBIfam" id="NF003260">
    <property type="entry name" value="PRK04223.1"/>
    <property type="match status" value="1"/>
</dbReference>
<dbReference type="NCBIfam" id="TIGR01038">
    <property type="entry name" value="uL22_arch_euk"/>
    <property type="match status" value="1"/>
</dbReference>
<dbReference type="PANTHER" id="PTHR11593">
    <property type="entry name" value="60S RIBOSOMAL PROTEIN L17"/>
    <property type="match status" value="1"/>
</dbReference>
<dbReference type="PANTHER" id="PTHR11593:SF10">
    <property type="entry name" value="60S RIBOSOMAL PROTEIN L17"/>
    <property type="match status" value="1"/>
</dbReference>
<dbReference type="Pfam" id="PF00237">
    <property type="entry name" value="Ribosomal_L22"/>
    <property type="match status" value="1"/>
</dbReference>
<dbReference type="SUPFAM" id="SSF54843">
    <property type="entry name" value="Ribosomal protein L22"/>
    <property type="match status" value="1"/>
</dbReference>
<reference key="1">
    <citation type="journal article" date="1997" name="Nature">
        <title>The complete genome sequence of the hyperthermophilic, sulphate-reducing archaeon Archaeoglobus fulgidus.</title>
        <authorList>
            <person name="Klenk H.-P."/>
            <person name="Clayton R.A."/>
            <person name="Tomb J.-F."/>
            <person name="White O."/>
            <person name="Nelson K.E."/>
            <person name="Ketchum K.A."/>
            <person name="Dodson R.J."/>
            <person name="Gwinn M.L."/>
            <person name="Hickey E.K."/>
            <person name="Peterson J.D."/>
            <person name="Richardson D.L."/>
            <person name="Kerlavage A.R."/>
            <person name="Graham D.E."/>
            <person name="Kyrpides N.C."/>
            <person name="Fleischmann R.D."/>
            <person name="Quackenbush J."/>
            <person name="Lee N.H."/>
            <person name="Sutton G.G."/>
            <person name="Gill S.R."/>
            <person name="Kirkness E.F."/>
            <person name="Dougherty B.A."/>
            <person name="McKenney K."/>
            <person name="Adams M.D."/>
            <person name="Loftus B.J."/>
            <person name="Peterson S.N."/>
            <person name="Reich C.I."/>
            <person name="McNeil L.K."/>
            <person name="Badger J.H."/>
            <person name="Glodek A."/>
            <person name="Zhou L."/>
            <person name="Overbeek R."/>
            <person name="Gocayne J.D."/>
            <person name="Weidman J.F."/>
            <person name="McDonald L.A."/>
            <person name="Utterback T.R."/>
            <person name="Cotton M.D."/>
            <person name="Spriggs T."/>
            <person name="Artiach P."/>
            <person name="Kaine B.P."/>
            <person name="Sykes S.M."/>
            <person name="Sadow P.W."/>
            <person name="D'Andrea K.P."/>
            <person name="Bowman C."/>
            <person name="Fujii C."/>
            <person name="Garland S.A."/>
            <person name="Mason T.M."/>
            <person name="Olsen G.J."/>
            <person name="Fraser C.M."/>
            <person name="Smith H.O."/>
            <person name="Woese C.R."/>
            <person name="Venter J.C."/>
        </authorList>
    </citation>
    <scope>NUCLEOTIDE SEQUENCE [LARGE SCALE GENOMIC DNA]</scope>
    <source>
        <strain>ATCC 49558 / DSM 4304 / JCM 9628 / NBRC 100126 / VC-16</strain>
    </source>
</reference>
<evidence type="ECO:0000255" key="1">
    <source>
        <dbReference type="HAMAP-Rule" id="MF_01331"/>
    </source>
</evidence>
<evidence type="ECO:0000305" key="2"/>
<proteinExistence type="inferred from homology"/>
<organism>
    <name type="scientific">Archaeoglobus fulgidus (strain ATCC 49558 / DSM 4304 / JCM 9628 / NBRC 100126 / VC-16)</name>
    <dbReference type="NCBI Taxonomy" id="224325"/>
    <lineage>
        <taxon>Archaea</taxon>
        <taxon>Methanobacteriati</taxon>
        <taxon>Methanobacteriota</taxon>
        <taxon>Archaeoglobi</taxon>
        <taxon>Archaeoglobales</taxon>
        <taxon>Archaeoglobaceae</taxon>
        <taxon>Archaeoglobus</taxon>
    </lineage>
</organism>
<keyword id="KW-1185">Reference proteome</keyword>
<keyword id="KW-0687">Ribonucleoprotein</keyword>
<keyword id="KW-0689">Ribosomal protein</keyword>
<keyword id="KW-0694">RNA-binding</keyword>
<keyword id="KW-0699">rRNA-binding</keyword>
<comment type="function">
    <text evidence="1">This protein binds specifically to 23S rRNA. It makes multiple contacts with different domains of the 23S rRNA in the assembled 50S subunit and ribosome.</text>
</comment>
<comment type="function">
    <text evidence="1">The globular domain of the protein is located near the polypeptide exit tunnel on the outside of the subunit, while an extended beta-hairpin is found that lines the wall of the exit tunnel in the center of the 70S ribosome.</text>
</comment>
<comment type="subunit">
    <text evidence="1">Part of the 50S ribosomal subunit.</text>
</comment>
<comment type="similarity">
    <text evidence="1">Belongs to the universal ribosomal protein uL22 family.</text>
</comment>
<gene>
    <name evidence="1" type="primary">rpl22</name>
    <name type="ordered locus">AF_1920</name>
</gene>
<accession>O28359</accession>
<sequence length="155" mass="18026">MPMARVNYAYKPEDETKAAKAMGYEMPISFKHAVEICRAIRGKKIEEARKLLEDVVEMKRAIPFKRHKKKVAHRRGLEKWYAGRYPQKAAKYVLKVLRNLEANAEYKGLDVENLVIVHAQAQKGRVIERYMPRAFGRATPRFQQLTTVELVAEVR</sequence>
<protein>
    <recommendedName>
        <fullName evidence="1">Large ribosomal subunit protein uL22</fullName>
    </recommendedName>
    <alternativeName>
        <fullName evidence="2">50S ribosomal protein L22</fullName>
    </alternativeName>
</protein>
<name>RL22_ARCFU</name>